<keyword id="KW-0028">Amino-acid biosynthesis</keyword>
<keyword id="KW-0963">Cytoplasm</keyword>
<keyword id="KW-0220">Diaminopimelate biosynthesis</keyword>
<keyword id="KW-0457">Lysine biosynthesis</keyword>
<keyword id="KW-0520">NAD</keyword>
<keyword id="KW-0521">NADP</keyword>
<keyword id="KW-0560">Oxidoreductase</keyword>
<gene>
    <name evidence="1" type="primary">dapB</name>
    <name type="ordered locus">SSU05_0828</name>
</gene>
<accession>A4VUK5</accession>
<comment type="function">
    <text evidence="1">Catalyzes the conversion of 4-hydroxy-tetrahydrodipicolinate (HTPA) to tetrahydrodipicolinate.</text>
</comment>
<comment type="catalytic activity">
    <reaction evidence="1">
        <text>(S)-2,3,4,5-tetrahydrodipicolinate + NAD(+) + H2O = (2S,4S)-4-hydroxy-2,3,4,5-tetrahydrodipicolinate + NADH + H(+)</text>
        <dbReference type="Rhea" id="RHEA:35323"/>
        <dbReference type="ChEBI" id="CHEBI:15377"/>
        <dbReference type="ChEBI" id="CHEBI:15378"/>
        <dbReference type="ChEBI" id="CHEBI:16845"/>
        <dbReference type="ChEBI" id="CHEBI:57540"/>
        <dbReference type="ChEBI" id="CHEBI:57945"/>
        <dbReference type="ChEBI" id="CHEBI:67139"/>
        <dbReference type="EC" id="1.17.1.8"/>
    </reaction>
</comment>
<comment type="catalytic activity">
    <reaction evidence="1">
        <text>(S)-2,3,4,5-tetrahydrodipicolinate + NADP(+) + H2O = (2S,4S)-4-hydroxy-2,3,4,5-tetrahydrodipicolinate + NADPH + H(+)</text>
        <dbReference type="Rhea" id="RHEA:35331"/>
        <dbReference type="ChEBI" id="CHEBI:15377"/>
        <dbReference type="ChEBI" id="CHEBI:15378"/>
        <dbReference type="ChEBI" id="CHEBI:16845"/>
        <dbReference type="ChEBI" id="CHEBI:57783"/>
        <dbReference type="ChEBI" id="CHEBI:58349"/>
        <dbReference type="ChEBI" id="CHEBI:67139"/>
        <dbReference type="EC" id="1.17.1.8"/>
    </reaction>
</comment>
<comment type="pathway">
    <text evidence="1">Amino-acid biosynthesis; L-lysine biosynthesis via DAP pathway; (S)-tetrahydrodipicolinate from L-aspartate: step 4/4.</text>
</comment>
<comment type="subcellular location">
    <subcellularLocation>
        <location evidence="1">Cytoplasm</location>
    </subcellularLocation>
</comment>
<comment type="similarity">
    <text evidence="1">Belongs to the DapB family.</text>
</comment>
<comment type="caution">
    <text evidence="2">Was originally thought to be a dihydrodipicolinate reductase (DHDPR), catalyzing the conversion of dihydrodipicolinate to tetrahydrodipicolinate. However, it was shown in E.coli that the substrate of the enzymatic reaction is not dihydrodipicolinate (DHDP) but in fact (2S,4S)-4-hydroxy-2,3,4,5-tetrahydrodipicolinic acid (HTPA), the product released by the DapA-catalyzed reaction.</text>
</comment>
<reference key="1">
    <citation type="journal article" date="2007" name="PLoS ONE">
        <title>A glimpse of streptococcal toxic shock syndrome from comparative genomics of S. suis 2 Chinese isolates.</title>
        <authorList>
            <person name="Chen C."/>
            <person name="Tang J."/>
            <person name="Dong W."/>
            <person name="Wang C."/>
            <person name="Feng Y."/>
            <person name="Wang J."/>
            <person name="Zheng F."/>
            <person name="Pan X."/>
            <person name="Liu D."/>
            <person name="Li M."/>
            <person name="Song Y."/>
            <person name="Zhu X."/>
            <person name="Sun H."/>
            <person name="Feng T."/>
            <person name="Guo Z."/>
            <person name="Ju A."/>
            <person name="Ge J."/>
            <person name="Dong Y."/>
            <person name="Sun W."/>
            <person name="Jiang Y."/>
            <person name="Wang J."/>
            <person name="Yan J."/>
            <person name="Yang H."/>
            <person name="Wang X."/>
            <person name="Gao G.F."/>
            <person name="Yang R."/>
            <person name="Wang J."/>
            <person name="Yu J."/>
        </authorList>
    </citation>
    <scope>NUCLEOTIDE SEQUENCE [LARGE SCALE GENOMIC DNA]</scope>
    <source>
        <strain>05ZYH33</strain>
    </source>
</reference>
<dbReference type="EC" id="1.17.1.8" evidence="1"/>
<dbReference type="EMBL" id="CP000407">
    <property type="protein sequence ID" value="ABP89794.1"/>
    <property type="molecule type" value="Genomic_DNA"/>
</dbReference>
<dbReference type="SMR" id="A4VUK5"/>
<dbReference type="STRING" id="391295.SSU05_0828"/>
<dbReference type="KEGG" id="ssu:SSU05_0828"/>
<dbReference type="eggNOG" id="COG0289">
    <property type="taxonomic scope" value="Bacteria"/>
</dbReference>
<dbReference type="HOGENOM" id="CLU_047479_0_1_9"/>
<dbReference type="UniPathway" id="UPA00034">
    <property type="reaction ID" value="UER00018"/>
</dbReference>
<dbReference type="GO" id="GO:0005829">
    <property type="term" value="C:cytosol"/>
    <property type="evidence" value="ECO:0007669"/>
    <property type="project" value="TreeGrafter"/>
</dbReference>
<dbReference type="GO" id="GO:0008839">
    <property type="term" value="F:4-hydroxy-tetrahydrodipicolinate reductase"/>
    <property type="evidence" value="ECO:0007669"/>
    <property type="project" value="UniProtKB-EC"/>
</dbReference>
<dbReference type="GO" id="GO:0051287">
    <property type="term" value="F:NAD binding"/>
    <property type="evidence" value="ECO:0007669"/>
    <property type="project" value="UniProtKB-UniRule"/>
</dbReference>
<dbReference type="GO" id="GO:0050661">
    <property type="term" value="F:NADP binding"/>
    <property type="evidence" value="ECO:0007669"/>
    <property type="project" value="UniProtKB-UniRule"/>
</dbReference>
<dbReference type="GO" id="GO:0016726">
    <property type="term" value="F:oxidoreductase activity, acting on CH or CH2 groups, NAD or NADP as acceptor"/>
    <property type="evidence" value="ECO:0007669"/>
    <property type="project" value="UniProtKB-UniRule"/>
</dbReference>
<dbReference type="GO" id="GO:0019877">
    <property type="term" value="P:diaminopimelate biosynthetic process"/>
    <property type="evidence" value="ECO:0007669"/>
    <property type="project" value="UniProtKB-UniRule"/>
</dbReference>
<dbReference type="GO" id="GO:0009089">
    <property type="term" value="P:lysine biosynthetic process via diaminopimelate"/>
    <property type="evidence" value="ECO:0007669"/>
    <property type="project" value="UniProtKB-UniRule"/>
</dbReference>
<dbReference type="CDD" id="cd02274">
    <property type="entry name" value="DHDPR_N"/>
    <property type="match status" value="1"/>
</dbReference>
<dbReference type="FunFam" id="3.30.360.10:FF:000009">
    <property type="entry name" value="4-hydroxy-tetrahydrodipicolinate reductase"/>
    <property type="match status" value="1"/>
</dbReference>
<dbReference type="Gene3D" id="3.30.360.10">
    <property type="entry name" value="Dihydrodipicolinate Reductase, domain 2"/>
    <property type="match status" value="1"/>
</dbReference>
<dbReference type="Gene3D" id="3.40.50.720">
    <property type="entry name" value="NAD(P)-binding Rossmann-like Domain"/>
    <property type="match status" value="1"/>
</dbReference>
<dbReference type="HAMAP" id="MF_00102">
    <property type="entry name" value="DapB"/>
    <property type="match status" value="1"/>
</dbReference>
<dbReference type="InterPro" id="IPR022663">
    <property type="entry name" value="DapB_C"/>
</dbReference>
<dbReference type="InterPro" id="IPR000846">
    <property type="entry name" value="DapB_N"/>
</dbReference>
<dbReference type="InterPro" id="IPR022664">
    <property type="entry name" value="DapB_N_CS"/>
</dbReference>
<dbReference type="InterPro" id="IPR023940">
    <property type="entry name" value="DHDPR_bac"/>
</dbReference>
<dbReference type="InterPro" id="IPR036291">
    <property type="entry name" value="NAD(P)-bd_dom_sf"/>
</dbReference>
<dbReference type="NCBIfam" id="TIGR00036">
    <property type="entry name" value="dapB"/>
    <property type="match status" value="1"/>
</dbReference>
<dbReference type="PANTHER" id="PTHR20836:SF0">
    <property type="entry name" value="4-HYDROXY-TETRAHYDRODIPICOLINATE REDUCTASE 1, CHLOROPLASTIC-RELATED"/>
    <property type="match status" value="1"/>
</dbReference>
<dbReference type="PANTHER" id="PTHR20836">
    <property type="entry name" value="DIHYDRODIPICOLINATE REDUCTASE"/>
    <property type="match status" value="1"/>
</dbReference>
<dbReference type="Pfam" id="PF05173">
    <property type="entry name" value="DapB_C"/>
    <property type="match status" value="1"/>
</dbReference>
<dbReference type="Pfam" id="PF01113">
    <property type="entry name" value="DapB_N"/>
    <property type="match status" value="1"/>
</dbReference>
<dbReference type="PIRSF" id="PIRSF000161">
    <property type="entry name" value="DHPR"/>
    <property type="match status" value="1"/>
</dbReference>
<dbReference type="SUPFAM" id="SSF55347">
    <property type="entry name" value="Glyceraldehyde-3-phosphate dehydrogenase-like, C-terminal domain"/>
    <property type="match status" value="1"/>
</dbReference>
<dbReference type="SUPFAM" id="SSF51735">
    <property type="entry name" value="NAD(P)-binding Rossmann-fold domains"/>
    <property type="match status" value="1"/>
</dbReference>
<dbReference type="PROSITE" id="PS01298">
    <property type="entry name" value="DAPB"/>
    <property type="match status" value="1"/>
</dbReference>
<evidence type="ECO:0000255" key="1">
    <source>
        <dbReference type="HAMAP-Rule" id="MF_00102"/>
    </source>
</evidence>
<evidence type="ECO:0000305" key="2"/>
<sequence length="255" mass="27350">MTIKVIIAGFKGKMGSTAVEMVKGDAALSLAALVDPFATETEVDGVPVFKTKEEVASLEADVWVDFTTPKFTYENTRFALENGFAPVVGTTGFTPEEIEELTALSAEKGLGGLIAPNFAIGAILLMQFAAQAAKYFPNLEIIELHHDKKKDAPSGTAVKTAELISQVRQSQTQGAADEEELIAGARGAAFDGFRIHSVRLPGLVAHQEVIFGAQGEGLTIRHDSYDRISFMGGVNLGIKEVVKRSQLVYGLEHLL</sequence>
<feature type="chain" id="PRO_1000008648" description="4-hydroxy-tetrahydrodipicolinate reductase">
    <location>
        <begin position="1"/>
        <end position="255"/>
    </location>
</feature>
<feature type="active site" description="Proton donor/acceptor" evidence="1">
    <location>
        <position position="145"/>
    </location>
</feature>
<feature type="active site" description="Proton donor" evidence="1">
    <location>
        <position position="149"/>
    </location>
</feature>
<feature type="binding site" evidence="1">
    <location>
        <begin position="9"/>
        <end position="14"/>
    </location>
    <ligand>
        <name>NAD(+)</name>
        <dbReference type="ChEBI" id="CHEBI:57540"/>
    </ligand>
</feature>
<feature type="binding site" evidence="1">
    <location>
        <begin position="89"/>
        <end position="91"/>
    </location>
    <ligand>
        <name>NAD(+)</name>
        <dbReference type="ChEBI" id="CHEBI:57540"/>
    </ligand>
</feature>
<feature type="binding site" evidence="1">
    <location>
        <begin position="115"/>
        <end position="118"/>
    </location>
    <ligand>
        <name>NAD(+)</name>
        <dbReference type="ChEBI" id="CHEBI:57540"/>
    </ligand>
</feature>
<feature type="binding site" evidence="1">
    <location>
        <position position="146"/>
    </location>
    <ligand>
        <name>(S)-2,3,4,5-tetrahydrodipicolinate</name>
        <dbReference type="ChEBI" id="CHEBI:16845"/>
    </ligand>
</feature>
<feature type="binding site" evidence="1">
    <location>
        <begin position="155"/>
        <end position="156"/>
    </location>
    <ligand>
        <name>(S)-2,3,4,5-tetrahydrodipicolinate</name>
        <dbReference type="ChEBI" id="CHEBI:16845"/>
    </ligand>
</feature>
<organism>
    <name type="scientific">Streptococcus suis (strain 05ZYH33)</name>
    <dbReference type="NCBI Taxonomy" id="391295"/>
    <lineage>
        <taxon>Bacteria</taxon>
        <taxon>Bacillati</taxon>
        <taxon>Bacillota</taxon>
        <taxon>Bacilli</taxon>
        <taxon>Lactobacillales</taxon>
        <taxon>Streptococcaceae</taxon>
        <taxon>Streptococcus</taxon>
    </lineage>
</organism>
<protein>
    <recommendedName>
        <fullName evidence="1">4-hydroxy-tetrahydrodipicolinate reductase</fullName>
        <shortName evidence="1">HTPA reductase</shortName>
        <ecNumber evidence="1">1.17.1.8</ecNumber>
    </recommendedName>
</protein>
<proteinExistence type="inferred from homology"/>
<name>DAPB_STRSY</name>